<organism>
    <name type="scientific">Lactococcus lactis subsp. lactis (strain IL1403)</name>
    <name type="common">Streptococcus lactis</name>
    <dbReference type="NCBI Taxonomy" id="272623"/>
    <lineage>
        <taxon>Bacteria</taxon>
        <taxon>Bacillati</taxon>
        <taxon>Bacillota</taxon>
        <taxon>Bacilli</taxon>
        <taxon>Lactobacillales</taxon>
        <taxon>Streptococcaceae</taxon>
        <taxon>Lactococcus</taxon>
    </lineage>
</organism>
<evidence type="ECO:0000255" key="1">
    <source>
        <dbReference type="HAMAP-Rule" id="MF_00318"/>
    </source>
</evidence>
<evidence type="ECO:0000256" key="2">
    <source>
        <dbReference type="SAM" id="MobiDB-lite"/>
    </source>
</evidence>
<name>ENO1_LACLA</name>
<protein>
    <recommendedName>
        <fullName evidence="1">Enolase 1</fullName>
        <ecNumber evidence="1">4.2.1.11</ecNumber>
    </recommendedName>
    <alternativeName>
        <fullName evidence="1">2-phospho-D-glycerate hydro-lyase 1</fullName>
    </alternativeName>
    <alternativeName>
        <fullName evidence="1">2-phosphoglycerate dehydratase 1</fullName>
    </alternativeName>
</protein>
<dbReference type="EC" id="4.2.1.11" evidence="1"/>
<dbReference type="EMBL" id="AE005176">
    <property type="protein sequence ID" value="AAK04742.1"/>
    <property type="molecule type" value="Genomic_DNA"/>
</dbReference>
<dbReference type="PIR" id="D86705">
    <property type="entry name" value="D86705"/>
</dbReference>
<dbReference type="RefSeq" id="NP_266800.1">
    <property type="nucleotide sequence ID" value="NC_002662.1"/>
</dbReference>
<dbReference type="SMR" id="Q9CHS7"/>
<dbReference type="PaxDb" id="272623-L0007"/>
<dbReference type="EnsemblBacteria" id="AAK04742">
    <property type="protein sequence ID" value="AAK04742"/>
    <property type="gene ID" value="L0007"/>
</dbReference>
<dbReference type="KEGG" id="lla:L0007"/>
<dbReference type="PATRIC" id="fig|272623.7.peg.688"/>
<dbReference type="eggNOG" id="COG0148">
    <property type="taxonomic scope" value="Bacteria"/>
</dbReference>
<dbReference type="HOGENOM" id="CLU_031223_2_1_9"/>
<dbReference type="OrthoDB" id="9804716at2"/>
<dbReference type="UniPathway" id="UPA00109">
    <property type="reaction ID" value="UER00187"/>
</dbReference>
<dbReference type="Proteomes" id="UP000002196">
    <property type="component" value="Chromosome"/>
</dbReference>
<dbReference type="GO" id="GO:0009986">
    <property type="term" value="C:cell surface"/>
    <property type="evidence" value="ECO:0007669"/>
    <property type="project" value="UniProtKB-SubCell"/>
</dbReference>
<dbReference type="GO" id="GO:0005576">
    <property type="term" value="C:extracellular region"/>
    <property type="evidence" value="ECO:0007669"/>
    <property type="project" value="UniProtKB-SubCell"/>
</dbReference>
<dbReference type="GO" id="GO:0009274">
    <property type="term" value="C:peptidoglycan-based cell wall"/>
    <property type="evidence" value="ECO:0007669"/>
    <property type="project" value="UniProtKB-ARBA"/>
</dbReference>
<dbReference type="GO" id="GO:0000015">
    <property type="term" value="C:phosphopyruvate hydratase complex"/>
    <property type="evidence" value="ECO:0007669"/>
    <property type="project" value="InterPro"/>
</dbReference>
<dbReference type="GO" id="GO:0000287">
    <property type="term" value="F:magnesium ion binding"/>
    <property type="evidence" value="ECO:0007669"/>
    <property type="project" value="UniProtKB-UniRule"/>
</dbReference>
<dbReference type="GO" id="GO:0004634">
    <property type="term" value="F:phosphopyruvate hydratase activity"/>
    <property type="evidence" value="ECO:0007669"/>
    <property type="project" value="UniProtKB-UniRule"/>
</dbReference>
<dbReference type="GO" id="GO:0006096">
    <property type="term" value="P:glycolytic process"/>
    <property type="evidence" value="ECO:0007669"/>
    <property type="project" value="UniProtKB-UniRule"/>
</dbReference>
<dbReference type="CDD" id="cd03313">
    <property type="entry name" value="enolase"/>
    <property type="match status" value="1"/>
</dbReference>
<dbReference type="FunFam" id="3.20.20.120:FF:000001">
    <property type="entry name" value="Enolase"/>
    <property type="match status" value="1"/>
</dbReference>
<dbReference type="FunFam" id="3.30.390.10:FF:000001">
    <property type="entry name" value="Enolase"/>
    <property type="match status" value="1"/>
</dbReference>
<dbReference type="Gene3D" id="3.20.20.120">
    <property type="entry name" value="Enolase-like C-terminal domain"/>
    <property type="match status" value="1"/>
</dbReference>
<dbReference type="Gene3D" id="3.30.390.10">
    <property type="entry name" value="Enolase-like, N-terminal domain"/>
    <property type="match status" value="1"/>
</dbReference>
<dbReference type="HAMAP" id="MF_00318">
    <property type="entry name" value="Enolase"/>
    <property type="match status" value="1"/>
</dbReference>
<dbReference type="InterPro" id="IPR000941">
    <property type="entry name" value="Enolase"/>
</dbReference>
<dbReference type="InterPro" id="IPR036849">
    <property type="entry name" value="Enolase-like_C_sf"/>
</dbReference>
<dbReference type="InterPro" id="IPR029017">
    <property type="entry name" value="Enolase-like_N"/>
</dbReference>
<dbReference type="InterPro" id="IPR020810">
    <property type="entry name" value="Enolase_C"/>
</dbReference>
<dbReference type="InterPro" id="IPR020809">
    <property type="entry name" value="Enolase_CS"/>
</dbReference>
<dbReference type="InterPro" id="IPR020811">
    <property type="entry name" value="Enolase_N"/>
</dbReference>
<dbReference type="NCBIfam" id="TIGR01060">
    <property type="entry name" value="eno"/>
    <property type="match status" value="1"/>
</dbReference>
<dbReference type="PANTHER" id="PTHR11902">
    <property type="entry name" value="ENOLASE"/>
    <property type="match status" value="1"/>
</dbReference>
<dbReference type="PANTHER" id="PTHR11902:SF1">
    <property type="entry name" value="ENOLASE"/>
    <property type="match status" value="1"/>
</dbReference>
<dbReference type="Pfam" id="PF00113">
    <property type="entry name" value="Enolase_C"/>
    <property type="match status" value="1"/>
</dbReference>
<dbReference type="Pfam" id="PF03952">
    <property type="entry name" value="Enolase_N"/>
    <property type="match status" value="1"/>
</dbReference>
<dbReference type="PIRSF" id="PIRSF001400">
    <property type="entry name" value="Enolase"/>
    <property type="match status" value="1"/>
</dbReference>
<dbReference type="PRINTS" id="PR00148">
    <property type="entry name" value="ENOLASE"/>
</dbReference>
<dbReference type="SFLD" id="SFLDS00001">
    <property type="entry name" value="Enolase"/>
    <property type="match status" value="1"/>
</dbReference>
<dbReference type="SFLD" id="SFLDF00002">
    <property type="entry name" value="enolase"/>
    <property type="match status" value="1"/>
</dbReference>
<dbReference type="SMART" id="SM01192">
    <property type="entry name" value="Enolase_C"/>
    <property type="match status" value="1"/>
</dbReference>
<dbReference type="SMART" id="SM01193">
    <property type="entry name" value="Enolase_N"/>
    <property type="match status" value="1"/>
</dbReference>
<dbReference type="SUPFAM" id="SSF51604">
    <property type="entry name" value="Enolase C-terminal domain-like"/>
    <property type="match status" value="1"/>
</dbReference>
<dbReference type="SUPFAM" id="SSF54826">
    <property type="entry name" value="Enolase N-terminal domain-like"/>
    <property type="match status" value="1"/>
</dbReference>
<dbReference type="PROSITE" id="PS00164">
    <property type="entry name" value="ENOLASE"/>
    <property type="match status" value="1"/>
</dbReference>
<proteinExistence type="inferred from homology"/>
<sequence length="433" mass="46912">MSIITDIYAREVLDSRGNPTLEVEVYTEDGAFGRGMVPSGASTGEHEAVELRDGDKSRYNGLGTQKAVDNVNNIIAEAIIGYEVTDQQAIDRAMIALDGTENKGKLGANAILGVSIAAARAAADELGVPLYNYLGGFNAKVLPTPMMNIINGGSHSDAPIAFQEFMIVPVGAPTFKEALRWGAEIFHALKKILKARGLETAVGDEGGFAPKFDGTEDGVETILKAIEAAGYKAGEDGVMIGFDCASSEFYENGVYDYTKFEGEGGKKLSASEQVDYLEELVSKYPIITIEDGMDENDWDGWKILTERLGKKVQLVGDDFFVTNTKYLERGIRENASNAILIKVNQIGTLTETFEAIEMAKEAGFTAIVSHRSGETEDSTISDIAVATNAGQIKTGSLSRTDRMAKYNQLLRIEDQLAEVAQYKGLKAFYNLKK</sequence>
<keyword id="KW-0963">Cytoplasm</keyword>
<keyword id="KW-0324">Glycolysis</keyword>
<keyword id="KW-0456">Lyase</keyword>
<keyword id="KW-0460">Magnesium</keyword>
<keyword id="KW-0479">Metal-binding</keyword>
<keyword id="KW-1185">Reference proteome</keyword>
<keyword id="KW-0964">Secreted</keyword>
<comment type="function">
    <text evidence="1">Catalyzes the reversible conversion of 2-phosphoglycerate (2-PG) into phosphoenolpyruvate (PEP). It is essential for the degradation of carbohydrates via glycolysis.</text>
</comment>
<comment type="catalytic activity">
    <reaction evidence="1">
        <text>(2R)-2-phosphoglycerate = phosphoenolpyruvate + H2O</text>
        <dbReference type="Rhea" id="RHEA:10164"/>
        <dbReference type="ChEBI" id="CHEBI:15377"/>
        <dbReference type="ChEBI" id="CHEBI:58289"/>
        <dbReference type="ChEBI" id="CHEBI:58702"/>
        <dbReference type="EC" id="4.2.1.11"/>
    </reaction>
</comment>
<comment type="cofactor">
    <cofactor evidence="1">
        <name>Mg(2+)</name>
        <dbReference type="ChEBI" id="CHEBI:18420"/>
    </cofactor>
    <text evidence="1">Binds a second Mg(2+) ion via substrate during catalysis.</text>
</comment>
<comment type="pathway">
    <text evidence="1">Carbohydrate degradation; glycolysis; pyruvate from D-glyceraldehyde 3-phosphate: step 4/5.</text>
</comment>
<comment type="subcellular location">
    <subcellularLocation>
        <location evidence="1">Cytoplasm</location>
    </subcellularLocation>
    <subcellularLocation>
        <location evidence="1">Secreted</location>
    </subcellularLocation>
    <subcellularLocation>
        <location evidence="1">Cell surface</location>
    </subcellularLocation>
    <text evidence="1">Fractions of enolase are present in both the cytoplasm and on the cell surface.</text>
</comment>
<comment type="similarity">
    <text evidence="1">Belongs to the enolase family.</text>
</comment>
<gene>
    <name evidence="1" type="primary">eno1</name>
    <name type="synonym">enoA</name>
    <name type="ordered locus">LL0644</name>
    <name type="ORF">L0007</name>
</gene>
<accession>Q9CHS7</accession>
<reference key="1">
    <citation type="journal article" date="2001" name="Genome Res.">
        <title>The complete genome sequence of the lactic acid bacterium Lactococcus lactis ssp. lactis IL1403.</title>
        <authorList>
            <person name="Bolotin A."/>
            <person name="Wincker P."/>
            <person name="Mauger S."/>
            <person name="Jaillon O."/>
            <person name="Malarme K."/>
            <person name="Weissenbach J."/>
            <person name="Ehrlich S.D."/>
            <person name="Sorokin A."/>
        </authorList>
    </citation>
    <scope>NUCLEOTIDE SEQUENCE [LARGE SCALE GENOMIC DNA]</scope>
    <source>
        <strain>IL1403</strain>
    </source>
</reference>
<feature type="chain" id="PRO_0000133904" description="Enolase 1">
    <location>
        <begin position="1"/>
        <end position="433"/>
    </location>
</feature>
<feature type="region of interest" description="Disordered" evidence="2">
    <location>
        <begin position="34"/>
        <end position="56"/>
    </location>
</feature>
<feature type="compositionally biased region" description="Basic and acidic residues" evidence="2">
    <location>
        <begin position="44"/>
        <end position="56"/>
    </location>
</feature>
<feature type="active site" description="Proton donor" evidence="1">
    <location>
        <position position="205"/>
    </location>
</feature>
<feature type="active site" description="Proton acceptor" evidence="1">
    <location>
        <position position="342"/>
    </location>
</feature>
<feature type="binding site" evidence="1">
    <location>
        <position position="163"/>
    </location>
    <ligand>
        <name>(2R)-2-phosphoglycerate</name>
        <dbReference type="ChEBI" id="CHEBI:58289"/>
    </ligand>
</feature>
<feature type="binding site" evidence="1">
    <location>
        <position position="243"/>
    </location>
    <ligand>
        <name>Mg(2+)</name>
        <dbReference type="ChEBI" id="CHEBI:18420"/>
    </ligand>
</feature>
<feature type="binding site" evidence="1">
    <location>
        <position position="290"/>
    </location>
    <ligand>
        <name>Mg(2+)</name>
        <dbReference type="ChEBI" id="CHEBI:18420"/>
    </ligand>
</feature>
<feature type="binding site" evidence="1">
    <location>
        <position position="317"/>
    </location>
    <ligand>
        <name>Mg(2+)</name>
        <dbReference type="ChEBI" id="CHEBI:18420"/>
    </ligand>
</feature>
<feature type="binding site" evidence="1">
    <location>
        <position position="342"/>
    </location>
    <ligand>
        <name>(2R)-2-phosphoglycerate</name>
        <dbReference type="ChEBI" id="CHEBI:58289"/>
    </ligand>
</feature>
<feature type="binding site" evidence="1">
    <location>
        <position position="371"/>
    </location>
    <ligand>
        <name>(2R)-2-phosphoglycerate</name>
        <dbReference type="ChEBI" id="CHEBI:58289"/>
    </ligand>
</feature>
<feature type="binding site" evidence="1">
    <location>
        <position position="372"/>
    </location>
    <ligand>
        <name>(2R)-2-phosphoglycerate</name>
        <dbReference type="ChEBI" id="CHEBI:58289"/>
    </ligand>
</feature>
<feature type="binding site" evidence="1">
    <location>
        <position position="393"/>
    </location>
    <ligand>
        <name>(2R)-2-phosphoglycerate</name>
        <dbReference type="ChEBI" id="CHEBI:58289"/>
    </ligand>
</feature>